<sequence>MSEGESKSTHFGYKTVEADKKAELVAGVFHSVAAKYDIMNDVMSFGIHRFWKRHTIEVSGARPGMKVLDLAGGTGDLTAKFSHLVGDKGEVVLADINDSMLKVGRTKLRDKGIVNNVSYVQANAEALPFPDNHFDIITIAFGLRNVTDKDAALRSMNRVLKPGGKLLVLEFSKPQHEIMRKVYDLYSFKVLPKMGELITKDADSYEYLAESIRMHPDQDTLKQMMVDAGFEQVDYTNMTDGIVALHRGYKF</sequence>
<organism>
    <name type="scientific">Shewanella putrefaciens (strain CN-32 / ATCC BAA-453)</name>
    <dbReference type="NCBI Taxonomy" id="319224"/>
    <lineage>
        <taxon>Bacteria</taxon>
        <taxon>Pseudomonadati</taxon>
        <taxon>Pseudomonadota</taxon>
        <taxon>Gammaproteobacteria</taxon>
        <taxon>Alteromonadales</taxon>
        <taxon>Shewanellaceae</taxon>
        <taxon>Shewanella</taxon>
    </lineage>
</organism>
<dbReference type="EC" id="2.1.1.163" evidence="1"/>
<dbReference type="EC" id="2.1.1.201" evidence="1"/>
<dbReference type="EMBL" id="CP000681">
    <property type="protein sequence ID" value="ABP74238.1"/>
    <property type="molecule type" value="Genomic_DNA"/>
</dbReference>
<dbReference type="SMR" id="A4Y2Q5"/>
<dbReference type="STRING" id="319224.Sputcn32_0506"/>
<dbReference type="KEGG" id="spc:Sputcn32_0506"/>
<dbReference type="eggNOG" id="COG2226">
    <property type="taxonomic scope" value="Bacteria"/>
</dbReference>
<dbReference type="HOGENOM" id="CLU_037990_0_0_6"/>
<dbReference type="UniPathway" id="UPA00079">
    <property type="reaction ID" value="UER00169"/>
</dbReference>
<dbReference type="UniPathway" id="UPA00232"/>
<dbReference type="GO" id="GO:0008425">
    <property type="term" value="F:2-methoxy-6-polyprenyl-1,4-benzoquinol methyltransferase activity"/>
    <property type="evidence" value="ECO:0007669"/>
    <property type="project" value="UniProtKB-UniRule"/>
</dbReference>
<dbReference type="GO" id="GO:0043770">
    <property type="term" value="F:demethylmenaquinone methyltransferase activity"/>
    <property type="evidence" value="ECO:0007669"/>
    <property type="project" value="UniProtKB-UniRule"/>
</dbReference>
<dbReference type="GO" id="GO:0009060">
    <property type="term" value="P:aerobic respiration"/>
    <property type="evidence" value="ECO:0007669"/>
    <property type="project" value="UniProtKB-UniRule"/>
</dbReference>
<dbReference type="GO" id="GO:0009234">
    <property type="term" value="P:menaquinone biosynthetic process"/>
    <property type="evidence" value="ECO:0007669"/>
    <property type="project" value="UniProtKB-UniRule"/>
</dbReference>
<dbReference type="GO" id="GO:0032259">
    <property type="term" value="P:methylation"/>
    <property type="evidence" value="ECO:0007669"/>
    <property type="project" value="UniProtKB-KW"/>
</dbReference>
<dbReference type="CDD" id="cd02440">
    <property type="entry name" value="AdoMet_MTases"/>
    <property type="match status" value="1"/>
</dbReference>
<dbReference type="FunFam" id="3.40.50.150:FF:000014">
    <property type="entry name" value="Ubiquinone/menaquinone biosynthesis C-methyltransferase UbiE"/>
    <property type="match status" value="1"/>
</dbReference>
<dbReference type="Gene3D" id="3.40.50.150">
    <property type="entry name" value="Vaccinia Virus protein VP39"/>
    <property type="match status" value="1"/>
</dbReference>
<dbReference type="HAMAP" id="MF_01813">
    <property type="entry name" value="MenG_UbiE_methyltr"/>
    <property type="match status" value="1"/>
</dbReference>
<dbReference type="InterPro" id="IPR029063">
    <property type="entry name" value="SAM-dependent_MTases_sf"/>
</dbReference>
<dbReference type="InterPro" id="IPR004033">
    <property type="entry name" value="UbiE/COQ5_MeTrFase"/>
</dbReference>
<dbReference type="InterPro" id="IPR023576">
    <property type="entry name" value="UbiE/COQ5_MeTrFase_CS"/>
</dbReference>
<dbReference type="NCBIfam" id="TIGR01934">
    <property type="entry name" value="MenG_MenH_UbiE"/>
    <property type="match status" value="1"/>
</dbReference>
<dbReference type="NCBIfam" id="NF001240">
    <property type="entry name" value="PRK00216.1-1"/>
    <property type="match status" value="1"/>
</dbReference>
<dbReference type="NCBIfam" id="NF001242">
    <property type="entry name" value="PRK00216.1-3"/>
    <property type="match status" value="1"/>
</dbReference>
<dbReference type="NCBIfam" id="NF001244">
    <property type="entry name" value="PRK00216.1-5"/>
    <property type="match status" value="1"/>
</dbReference>
<dbReference type="PANTHER" id="PTHR43591:SF24">
    <property type="entry name" value="2-METHOXY-6-POLYPRENYL-1,4-BENZOQUINOL METHYLASE, MITOCHONDRIAL"/>
    <property type="match status" value="1"/>
</dbReference>
<dbReference type="PANTHER" id="PTHR43591">
    <property type="entry name" value="METHYLTRANSFERASE"/>
    <property type="match status" value="1"/>
</dbReference>
<dbReference type="Pfam" id="PF01209">
    <property type="entry name" value="Ubie_methyltran"/>
    <property type="match status" value="1"/>
</dbReference>
<dbReference type="SUPFAM" id="SSF53335">
    <property type="entry name" value="S-adenosyl-L-methionine-dependent methyltransferases"/>
    <property type="match status" value="1"/>
</dbReference>
<dbReference type="PROSITE" id="PS51608">
    <property type="entry name" value="SAM_MT_UBIE"/>
    <property type="match status" value="1"/>
</dbReference>
<dbReference type="PROSITE" id="PS01183">
    <property type="entry name" value="UBIE_1"/>
    <property type="match status" value="1"/>
</dbReference>
<dbReference type="PROSITE" id="PS01184">
    <property type="entry name" value="UBIE_2"/>
    <property type="match status" value="1"/>
</dbReference>
<gene>
    <name evidence="1" type="primary">ubiE</name>
    <name type="ordered locus">Sputcn32_0506</name>
</gene>
<keyword id="KW-0474">Menaquinone biosynthesis</keyword>
<keyword id="KW-0489">Methyltransferase</keyword>
<keyword id="KW-0949">S-adenosyl-L-methionine</keyword>
<keyword id="KW-0808">Transferase</keyword>
<keyword id="KW-0831">Ubiquinone biosynthesis</keyword>
<name>UBIE_SHEPC</name>
<evidence type="ECO:0000255" key="1">
    <source>
        <dbReference type="HAMAP-Rule" id="MF_01813"/>
    </source>
</evidence>
<accession>A4Y2Q5</accession>
<proteinExistence type="inferred from homology"/>
<reference key="1">
    <citation type="submission" date="2007-04" db="EMBL/GenBank/DDBJ databases">
        <title>Complete sequence of Shewanella putrefaciens CN-32.</title>
        <authorList>
            <consortium name="US DOE Joint Genome Institute"/>
            <person name="Copeland A."/>
            <person name="Lucas S."/>
            <person name="Lapidus A."/>
            <person name="Barry K."/>
            <person name="Detter J.C."/>
            <person name="Glavina del Rio T."/>
            <person name="Hammon N."/>
            <person name="Israni S."/>
            <person name="Dalin E."/>
            <person name="Tice H."/>
            <person name="Pitluck S."/>
            <person name="Chain P."/>
            <person name="Malfatti S."/>
            <person name="Shin M."/>
            <person name="Vergez L."/>
            <person name="Schmutz J."/>
            <person name="Larimer F."/>
            <person name="Land M."/>
            <person name="Hauser L."/>
            <person name="Kyrpides N."/>
            <person name="Mikhailova N."/>
            <person name="Romine M.F."/>
            <person name="Fredrickson J."/>
            <person name="Tiedje J."/>
            <person name="Richardson P."/>
        </authorList>
    </citation>
    <scope>NUCLEOTIDE SEQUENCE [LARGE SCALE GENOMIC DNA]</scope>
    <source>
        <strain>CN-32 / ATCC BAA-453</strain>
    </source>
</reference>
<comment type="function">
    <text evidence="1">Methyltransferase required for the conversion of demethylmenaquinol (DMKH2) to menaquinol (MKH2) and the conversion of 2-polyprenyl-6-methoxy-1,4-benzoquinol (DDMQH2) to 2-polyprenyl-3-methyl-6-methoxy-1,4-benzoquinol (DMQH2).</text>
</comment>
<comment type="catalytic activity">
    <reaction evidence="1">
        <text>a 2-demethylmenaquinol + S-adenosyl-L-methionine = a menaquinol + S-adenosyl-L-homocysteine + H(+)</text>
        <dbReference type="Rhea" id="RHEA:42640"/>
        <dbReference type="Rhea" id="RHEA-COMP:9539"/>
        <dbReference type="Rhea" id="RHEA-COMP:9563"/>
        <dbReference type="ChEBI" id="CHEBI:15378"/>
        <dbReference type="ChEBI" id="CHEBI:18151"/>
        <dbReference type="ChEBI" id="CHEBI:55437"/>
        <dbReference type="ChEBI" id="CHEBI:57856"/>
        <dbReference type="ChEBI" id="CHEBI:59789"/>
        <dbReference type="EC" id="2.1.1.163"/>
    </reaction>
</comment>
<comment type="catalytic activity">
    <reaction evidence="1">
        <text>a 2-methoxy-6-(all-trans-polyprenyl)benzene-1,4-diol + S-adenosyl-L-methionine = a 5-methoxy-2-methyl-3-(all-trans-polyprenyl)benzene-1,4-diol + S-adenosyl-L-homocysteine + H(+)</text>
        <dbReference type="Rhea" id="RHEA:28286"/>
        <dbReference type="Rhea" id="RHEA-COMP:10858"/>
        <dbReference type="Rhea" id="RHEA-COMP:10859"/>
        <dbReference type="ChEBI" id="CHEBI:15378"/>
        <dbReference type="ChEBI" id="CHEBI:57856"/>
        <dbReference type="ChEBI" id="CHEBI:59789"/>
        <dbReference type="ChEBI" id="CHEBI:84166"/>
        <dbReference type="ChEBI" id="CHEBI:84167"/>
        <dbReference type="EC" id="2.1.1.201"/>
    </reaction>
</comment>
<comment type="pathway">
    <text evidence="1">Quinol/quinone metabolism; menaquinone biosynthesis; menaquinol from 1,4-dihydroxy-2-naphthoate: step 2/2.</text>
</comment>
<comment type="pathway">
    <text evidence="1">Cofactor biosynthesis; ubiquinone biosynthesis.</text>
</comment>
<comment type="similarity">
    <text evidence="1">Belongs to the class I-like SAM-binding methyltransferase superfamily. MenG/UbiE family.</text>
</comment>
<feature type="chain" id="PRO_1000056298" description="Ubiquinone/menaquinone biosynthesis C-methyltransferase UbiE">
    <location>
        <begin position="1"/>
        <end position="251"/>
    </location>
</feature>
<feature type="binding site" evidence="1">
    <location>
        <position position="74"/>
    </location>
    <ligand>
        <name>S-adenosyl-L-methionine</name>
        <dbReference type="ChEBI" id="CHEBI:59789"/>
    </ligand>
</feature>
<feature type="binding site" evidence="1">
    <location>
        <position position="95"/>
    </location>
    <ligand>
        <name>S-adenosyl-L-methionine</name>
        <dbReference type="ChEBI" id="CHEBI:59789"/>
    </ligand>
</feature>
<feature type="binding site" evidence="1">
    <location>
        <begin position="123"/>
        <end position="124"/>
    </location>
    <ligand>
        <name>S-adenosyl-L-methionine</name>
        <dbReference type="ChEBI" id="CHEBI:59789"/>
    </ligand>
</feature>
<protein>
    <recommendedName>
        <fullName evidence="1">Ubiquinone/menaquinone biosynthesis C-methyltransferase UbiE</fullName>
        <ecNumber evidence="1">2.1.1.163</ecNumber>
        <ecNumber evidence="1">2.1.1.201</ecNumber>
    </recommendedName>
    <alternativeName>
        <fullName evidence="1">2-methoxy-6-polyprenyl-1,4-benzoquinol methylase</fullName>
    </alternativeName>
    <alternativeName>
        <fullName evidence="1">Demethylmenaquinone methyltransferase</fullName>
    </alternativeName>
</protein>